<reference key="1">
    <citation type="journal article" date="2001" name="J. Bacteriol.">
        <title>Genome sequence and comparative analysis of the solvent-producing bacterium Clostridium acetobutylicum.</title>
        <authorList>
            <person name="Noelling J."/>
            <person name="Breton G."/>
            <person name="Omelchenko M.V."/>
            <person name="Makarova K.S."/>
            <person name="Zeng Q."/>
            <person name="Gibson R."/>
            <person name="Lee H.M."/>
            <person name="Dubois J."/>
            <person name="Qiu D."/>
            <person name="Hitti J."/>
            <person name="Wolf Y.I."/>
            <person name="Tatusov R.L."/>
            <person name="Sabathe F."/>
            <person name="Doucette-Stamm L.A."/>
            <person name="Soucaille P."/>
            <person name="Daly M.J."/>
            <person name="Bennett G.N."/>
            <person name="Koonin E.V."/>
            <person name="Smith D.R."/>
        </authorList>
    </citation>
    <scope>NUCLEOTIDE SEQUENCE [LARGE SCALE GENOMIC DNA]</scope>
    <source>
        <strain>ATCC 824 / DSM 792 / JCM 1419 / IAM 19013 / LMG 5710 / NBRC 13948 / NRRL B-527 / VKM B-1787 / 2291 / W</strain>
    </source>
</reference>
<organism>
    <name type="scientific">Clostridium acetobutylicum (strain ATCC 824 / DSM 792 / JCM 1419 / IAM 19013 / LMG 5710 / NBRC 13948 / NRRL B-527 / VKM B-1787 / 2291 / W)</name>
    <dbReference type="NCBI Taxonomy" id="272562"/>
    <lineage>
        <taxon>Bacteria</taxon>
        <taxon>Bacillati</taxon>
        <taxon>Bacillota</taxon>
        <taxon>Clostridia</taxon>
        <taxon>Eubacteriales</taxon>
        <taxon>Clostridiaceae</taxon>
        <taxon>Clostridium</taxon>
    </lineage>
</organism>
<name>RS20_CLOAB</name>
<accession>Q97JK0</accession>
<proteinExistence type="inferred from homology"/>
<protein>
    <recommendedName>
        <fullName evidence="1">Small ribosomal subunit protein bS20</fullName>
    </recommendedName>
    <alternativeName>
        <fullName evidence="2">30S ribosomal protein S20</fullName>
    </alternativeName>
</protein>
<comment type="function">
    <text evidence="1">Binds directly to 16S ribosomal RNA.</text>
</comment>
<comment type="similarity">
    <text evidence="1">Belongs to the bacterial ribosomal protein bS20 family.</text>
</comment>
<dbReference type="EMBL" id="AE001437">
    <property type="protein sequence ID" value="AAK79245.1"/>
    <property type="molecule type" value="Genomic_DNA"/>
</dbReference>
<dbReference type="PIR" id="B97057">
    <property type="entry name" value="B97057"/>
</dbReference>
<dbReference type="RefSeq" id="NP_347905.1">
    <property type="nucleotide sequence ID" value="NC_003030.1"/>
</dbReference>
<dbReference type="RefSeq" id="WP_010964586.1">
    <property type="nucleotide sequence ID" value="NC_003030.1"/>
</dbReference>
<dbReference type="SMR" id="Q97JK0"/>
<dbReference type="STRING" id="272562.CA_C1274"/>
<dbReference type="GeneID" id="44997780"/>
<dbReference type="KEGG" id="cac:CA_C1274"/>
<dbReference type="PATRIC" id="fig|272562.8.peg.1475"/>
<dbReference type="eggNOG" id="COG0268">
    <property type="taxonomic scope" value="Bacteria"/>
</dbReference>
<dbReference type="HOGENOM" id="CLU_160655_1_0_9"/>
<dbReference type="OrthoDB" id="9808392at2"/>
<dbReference type="Proteomes" id="UP000000814">
    <property type="component" value="Chromosome"/>
</dbReference>
<dbReference type="GO" id="GO:0005829">
    <property type="term" value="C:cytosol"/>
    <property type="evidence" value="ECO:0007669"/>
    <property type="project" value="TreeGrafter"/>
</dbReference>
<dbReference type="GO" id="GO:0015935">
    <property type="term" value="C:small ribosomal subunit"/>
    <property type="evidence" value="ECO:0007669"/>
    <property type="project" value="TreeGrafter"/>
</dbReference>
<dbReference type="GO" id="GO:0070181">
    <property type="term" value="F:small ribosomal subunit rRNA binding"/>
    <property type="evidence" value="ECO:0007669"/>
    <property type="project" value="TreeGrafter"/>
</dbReference>
<dbReference type="GO" id="GO:0003735">
    <property type="term" value="F:structural constituent of ribosome"/>
    <property type="evidence" value="ECO:0007669"/>
    <property type="project" value="InterPro"/>
</dbReference>
<dbReference type="GO" id="GO:0006412">
    <property type="term" value="P:translation"/>
    <property type="evidence" value="ECO:0007669"/>
    <property type="project" value="UniProtKB-UniRule"/>
</dbReference>
<dbReference type="FunFam" id="1.20.58.110:FF:000001">
    <property type="entry name" value="30S ribosomal protein S20"/>
    <property type="match status" value="1"/>
</dbReference>
<dbReference type="Gene3D" id="1.20.58.110">
    <property type="entry name" value="Ribosomal protein S20"/>
    <property type="match status" value="1"/>
</dbReference>
<dbReference type="HAMAP" id="MF_00500">
    <property type="entry name" value="Ribosomal_bS20"/>
    <property type="match status" value="1"/>
</dbReference>
<dbReference type="InterPro" id="IPR002583">
    <property type="entry name" value="Ribosomal_bS20"/>
</dbReference>
<dbReference type="InterPro" id="IPR036510">
    <property type="entry name" value="Ribosomal_bS20_sf"/>
</dbReference>
<dbReference type="NCBIfam" id="TIGR00029">
    <property type="entry name" value="S20"/>
    <property type="match status" value="1"/>
</dbReference>
<dbReference type="PANTHER" id="PTHR33398">
    <property type="entry name" value="30S RIBOSOMAL PROTEIN S20"/>
    <property type="match status" value="1"/>
</dbReference>
<dbReference type="PANTHER" id="PTHR33398:SF1">
    <property type="entry name" value="SMALL RIBOSOMAL SUBUNIT PROTEIN BS20C"/>
    <property type="match status" value="1"/>
</dbReference>
<dbReference type="Pfam" id="PF01649">
    <property type="entry name" value="Ribosomal_S20p"/>
    <property type="match status" value="1"/>
</dbReference>
<dbReference type="SUPFAM" id="SSF46992">
    <property type="entry name" value="Ribosomal protein S20"/>
    <property type="match status" value="1"/>
</dbReference>
<gene>
    <name evidence="1" type="primary">rpsT</name>
    <name type="ordered locus">CA_C1274</name>
</gene>
<keyword id="KW-1185">Reference proteome</keyword>
<keyword id="KW-0687">Ribonucleoprotein</keyword>
<keyword id="KW-0689">Ribosomal protein</keyword>
<keyword id="KW-0694">RNA-binding</keyword>
<keyword id="KW-0699">rRNA-binding</keyword>
<evidence type="ECO:0000255" key="1">
    <source>
        <dbReference type="HAMAP-Rule" id="MF_00500"/>
    </source>
</evidence>
<evidence type="ECO:0000305" key="2"/>
<feature type="chain" id="PRO_0000167949" description="Small ribosomal subunit protein bS20">
    <location>
        <begin position="1"/>
        <end position="88"/>
    </location>
</feature>
<sequence>MANIKSAKKRIKVIETKTLRNKMIKSALKTYIKKFEAAFEAKNVEESKTAFATVSKALDMAASKGIIHKNKAARKKSRLALKLNSLNA</sequence>